<organism>
    <name type="scientific">Canis lupus familiaris</name>
    <name type="common">Dog</name>
    <name type="synonym">Canis familiaris</name>
    <dbReference type="NCBI Taxonomy" id="9615"/>
    <lineage>
        <taxon>Eukaryota</taxon>
        <taxon>Metazoa</taxon>
        <taxon>Chordata</taxon>
        <taxon>Craniata</taxon>
        <taxon>Vertebrata</taxon>
        <taxon>Euteleostomi</taxon>
        <taxon>Mammalia</taxon>
        <taxon>Eutheria</taxon>
        <taxon>Laurasiatheria</taxon>
        <taxon>Carnivora</taxon>
        <taxon>Caniformia</taxon>
        <taxon>Canidae</taxon>
        <taxon>Canis</taxon>
    </lineage>
</organism>
<proteinExistence type="evidence at transcript level"/>
<feature type="chain" id="PRO_0000289594" description="Gamma-crystallin B">
    <location>
        <begin position="1"/>
        <end position="175"/>
    </location>
</feature>
<feature type="domain" description="Beta/gamma crystallin 'Greek key' 1" evidence="2">
    <location>
        <begin position="2"/>
        <end position="40"/>
    </location>
</feature>
<feature type="domain" description="Beta/gamma crystallin 'Greek key' 2" evidence="2">
    <location>
        <begin position="41"/>
        <end position="83"/>
    </location>
</feature>
<feature type="domain" description="Beta/gamma crystallin 'Greek key' 3" evidence="2">
    <location>
        <begin position="89"/>
        <end position="129"/>
    </location>
</feature>
<feature type="domain" description="Beta/gamma crystallin 'Greek key' 4" evidence="2">
    <location>
        <begin position="130"/>
        <end position="172"/>
    </location>
</feature>
<feature type="region of interest" description="Connecting peptide">
    <location>
        <begin position="84"/>
        <end position="88"/>
    </location>
</feature>
<dbReference type="EMBL" id="EF426308">
    <property type="protein sequence ID" value="ABO14693.1"/>
    <property type="molecule type" value="mRNA"/>
</dbReference>
<dbReference type="RefSeq" id="NP_001104269.1">
    <property type="nucleotide sequence ID" value="NM_001110799.2"/>
</dbReference>
<dbReference type="SMR" id="A3RLE1"/>
<dbReference type="FunCoup" id="A3RLE1">
    <property type="interactions" value="29"/>
</dbReference>
<dbReference type="STRING" id="9615.ENSCAFP00000052047"/>
<dbReference type="PaxDb" id="9612-ENSCAFP00000019994"/>
<dbReference type="Ensembl" id="ENSCAFT00000021531.5">
    <property type="protein sequence ID" value="ENSCAFP00000019994.3"/>
    <property type="gene ID" value="ENSCAFG00000052904.1"/>
</dbReference>
<dbReference type="Ensembl" id="ENSCAFT00030020950.1">
    <property type="protein sequence ID" value="ENSCAFP00030018273.1"/>
    <property type="gene ID" value="ENSCAFG00030011216.1"/>
</dbReference>
<dbReference type="Ensembl" id="ENSCAFT00040048307.1">
    <property type="protein sequence ID" value="ENSCAFP00040042190.1"/>
    <property type="gene ID" value="ENSCAFG00040025842.1"/>
</dbReference>
<dbReference type="Ensembl" id="ENSCAFT00845040802.1">
    <property type="protein sequence ID" value="ENSCAFP00845031945.1"/>
    <property type="gene ID" value="ENSCAFG00845023028.1"/>
</dbReference>
<dbReference type="GeneID" id="488497"/>
<dbReference type="KEGG" id="cfa:488497"/>
<dbReference type="CTD" id="1419"/>
<dbReference type="VEuPathDB" id="HostDB:ENSCAFG00845023028"/>
<dbReference type="eggNOG" id="ENOG502RXJY">
    <property type="taxonomic scope" value="Eukaryota"/>
</dbReference>
<dbReference type="GeneTree" id="ENSGT00940000159232"/>
<dbReference type="HOGENOM" id="CLU_081883_1_1_1"/>
<dbReference type="InParanoid" id="A3RLE1"/>
<dbReference type="OMA" id="IHSLNVM"/>
<dbReference type="OrthoDB" id="44at33554"/>
<dbReference type="Proteomes" id="UP000002254">
    <property type="component" value="Chromosome 37"/>
</dbReference>
<dbReference type="Proteomes" id="UP000694429">
    <property type="component" value="Chromosome 37"/>
</dbReference>
<dbReference type="Proteomes" id="UP000694542">
    <property type="component" value="Chromosome 37"/>
</dbReference>
<dbReference type="Proteomes" id="UP000805418">
    <property type="component" value="Chromosome 37"/>
</dbReference>
<dbReference type="Bgee" id="ENSCAFG00000032653">
    <property type="expression patterns" value="Expressed in spinal cord and 5 other cell types or tissues"/>
</dbReference>
<dbReference type="GO" id="GO:0005212">
    <property type="term" value="F:structural constituent of eye lens"/>
    <property type="evidence" value="ECO:0007669"/>
    <property type="project" value="UniProtKB-KW"/>
</dbReference>
<dbReference type="FunFam" id="2.60.20.10:FF:000001">
    <property type="entry name" value="Crystallin gamma S"/>
    <property type="match status" value="1"/>
</dbReference>
<dbReference type="FunFam" id="2.60.20.10:FF:000003">
    <property type="entry name" value="Crystallin gamma S"/>
    <property type="match status" value="1"/>
</dbReference>
<dbReference type="Gene3D" id="2.60.20.10">
    <property type="entry name" value="Crystallins"/>
    <property type="match status" value="2"/>
</dbReference>
<dbReference type="InterPro" id="IPR050252">
    <property type="entry name" value="Beta/Gamma-Crystallin"/>
</dbReference>
<dbReference type="InterPro" id="IPR001064">
    <property type="entry name" value="Beta/gamma_crystallin"/>
</dbReference>
<dbReference type="InterPro" id="IPR011024">
    <property type="entry name" value="G_crystallin-like"/>
</dbReference>
<dbReference type="PANTHER" id="PTHR11818">
    <property type="entry name" value="BETA/GAMMA CRYSTALLIN"/>
    <property type="match status" value="1"/>
</dbReference>
<dbReference type="PANTHER" id="PTHR11818:SF101">
    <property type="entry name" value="GAMMA-CRYSTALLIN B"/>
    <property type="match status" value="1"/>
</dbReference>
<dbReference type="Pfam" id="PF00030">
    <property type="entry name" value="Crystall"/>
    <property type="match status" value="2"/>
</dbReference>
<dbReference type="PRINTS" id="PR01367">
    <property type="entry name" value="BGCRYSTALLIN"/>
</dbReference>
<dbReference type="SMART" id="SM00247">
    <property type="entry name" value="XTALbg"/>
    <property type="match status" value="2"/>
</dbReference>
<dbReference type="SUPFAM" id="SSF49695">
    <property type="entry name" value="gamma-Crystallin-like"/>
    <property type="match status" value="1"/>
</dbReference>
<dbReference type="PROSITE" id="PS50915">
    <property type="entry name" value="CRYSTALLIN_BETA_GAMMA"/>
    <property type="match status" value="4"/>
</dbReference>
<evidence type="ECO:0000250" key="1"/>
<evidence type="ECO:0000255" key="2">
    <source>
        <dbReference type="PROSITE-ProRule" id="PRU00028"/>
    </source>
</evidence>
<evidence type="ECO:0000305" key="3"/>
<gene>
    <name type="primary">CRYGB</name>
</gene>
<sequence>MGKITFYEDRGFQGRCYECSSDCPNLQPYFSRCNSIRVDSGCWMLYERPNYQGHQYFLRRGDYPDYQQWLGFSDSIRSCRLIPQHSGTFRMRIYERDDFRGQMSEITDDCLSLQDRFHLNEIHSLNVLDGCWVLYEMPSYRGRQYLLRPGEYRRYLDWGAMNAKVGSLRRVMDFY</sequence>
<accession>A3RLE1</accession>
<protein>
    <recommendedName>
        <fullName>Gamma-crystallin B</fullName>
    </recommendedName>
    <alternativeName>
        <fullName>Gamma-B-crystallin</fullName>
    </alternativeName>
</protein>
<reference key="1">
    <citation type="submission" date="2007-02" db="EMBL/GenBank/DDBJ databases">
        <title>Dog gammaB-crystallin.</title>
        <authorList>
            <person name="Wistow G."/>
        </authorList>
    </citation>
    <scope>NUCLEOTIDE SEQUENCE [MRNA]</scope>
    <source>
        <tissue>Lens</tissue>
    </source>
</reference>
<name>CRGB_CANLF</name>
<keyword id="KW-0273">Eye lens protein</keyword>
<keyword id="KW-1185">Reference proteome</keyword>
<keyword id="KW-0677">Repeat</keyword>
<comment type="function">
    <text evidence="1">Crystallins are the dominant structural components of the vertebrate eye lens.</text>
</comment>
<comment type="subunit">
    <text evidence="1">Monomer.</text>
</comment>
<comment type="domain">
    <text>Has a two-domain beta-structure, folded into four very similar Greek key motifs.</text>
</comment>
<comment type="similarity">
    <text evidence="3">Belongs to the beta/gamma-crystallin family.</text>
</comment>